<reference key="1">
    <citation type="journal article" date="2014" name="Plant J.">
        <title>The plant glycosyltransferase clone collection for functional genomics.</title>
        <authorList>
            <person name="Lao J."/>
            <person name="Oikawa A."/>
            <person name="Bromley J.R."/>
            <person name="McInerney P."/>
            <person name="Suttangkakul A."/>
            <person name="Smith-Moritz A.M."/>
            <person name="Plahar H."/>
            <person name="Chiu T.-Y."/>
            <person name="Gonzalez Fernandez-Nino S.M.G."/>
            <person name="Ebert B."/>
            <person name="Yang F."/>
            <person name="Christiansen K.M."/>
            <person name="Hansen S.F."/>
            <person name="Stonebloom S."/>
            <person name="Adams P.D."/>
            <person name="Ronald P.C."/>
            <person name="Hillson N.J."/>
            <person name="Hadi M.Z."/>
            <person name="Vega-Sanchez M.E."/>
            <person name="Loque D."/>
            <person name="Scheller H.V."/>
            <person name="Heazlewood J.L."/>
        </authorList>
    </citation>
    <scope>NUCLEOTIDE SEQUENCE [MRNA]</scope>
    <source>
        <strain>cv. Columbia</strain>
    </source>
</reference>
<reference key="2">
    <citation type="journal article" date="1999" name="Nature">
        <title>Sequence and analysis of chromosome 2 of the plant Arabidopsis thaliana.</title>
        <authorList>
            <person name="Lin X."/>
            <person name="Kaul S."/>
            <person name="Rounsley S.D."/>
            <person name="Shea T.P."/>
            <person name="Benito M.-I."/>
            <person name="Town C.D."/>
            <person name="Fujii C.Y."/>
            <person name="Mason T.M."/>
            <person name="Bowman C.L."/>
            <person name="Barnstead M.E."/>
            <person name="Feldblyum T.V."/>
            <person name="Buell C.R."/>
            <person name="Ketchum K.A."/>
            <person name="Lee J.J."/>
            <person name="Ronning C.M."/>
            <person name="Koo H.L."/>
            <person name="Moffat K.S."/>
            <person name="Cronin L.A."/>
            <person name="Shen M."/>
            <person name="Pai G."/>
            <person name="Van Aken S."/>
            <person name="Umayam L."/>
            <person name="Tallon L.J."/>
            <person name="Gill J.E."/>
            <person name="Adams M.D."/>
            <person name="Carrera A.J."/>
            <person name="Creasy T.H."/>
            <person name="Goodman H.M."/>
            <person name="Somerville C.R."/>
            <person name="Copenhaver G.P."/>
            <person name="Preuss D."/>
            <person name="Nierman W.C."/>
            <person name="White O."/>
            <person name="Eisen J.A."/>
            <person name="Salzberg S.L."/>
            <person name="Fraser C.M."/>
            <person name="Venter J.C."/>
        </authorList>
    </citation>
    <scope>NUCLEOTIDE SEQUENCE [LARGE SCALE GENOMIC DNA]</scope>
    <source>
        <strain>cv. Columbia</strain>
    </source>
</reference>
<reference key="3">
    <citation type="journal article" date="2017" name="Plant J.">
        <title>Araport11: a complete reannotation of the Arabidopsis thaliana reference genome.</title>
        <authorList>
            <person name="Cheng C.Y."/>
            <person name="Krishnakumar V."/>
            <person name="Chan A.P."/>
            <person name="Thibaud-Nissen F."/>
            <person name="Schobel S."/>
            <person name="Town C.D."/>
        </authorList>
    </citation>
    <scope>GENOME REANNOTATION</scope>
    <source>
        <strain>cv. Columbia</strain>
    </source>
</reference>
<reference key="4">
    <citation type="journal article" date="2003" name="Science">
        <title>Empirical analysis of transcriptional activity in the Arabidopsis genome.</title>
        <authorList>
            <person name="Yamada K."/>
            <person name="Lim J."/>
            <person name="Dale J.M."/>
            <person name="Chen H."/>
            <person name="Shinn P."/>
            <person name="Palm C.J."/>
            <person name="Southwick A.M."/>
            <person name="Wu H.C."/>
            <person name="Kim C.J."/>
            <person name="Nguyen M."/>
            <person name="Pham P.K."/>
            <person name="Cheuk R.F."/>
            <person name="Karlin-Newmann G."/>
            <person name="Liu S.X."/>
            <person name="Lam B."/>
            <person name="Sakano H."/>
            <person name="Wu T."/>
            <person name="Yu G."/>
            <person name="Miranda M."/>
            <person name="Quach H.L."/>
            <person name="Tripp M."/>
            <person name="Chang C.H."/>
            <person name="Lee J.M."/>
            <person name="Toriumi M.J."/>
            <person name="Chan M.M."/>
            <person name="Tang C.C."/>
            <person name="Onodera C.S."/>
            <person name="Deng J.M."/>
            <person name="Akiyama K."/>
            <person name="Ansari Y."/>
            <person name="Arakawa T."/>
            <person name="Banh J."/>
            <person name="Banno F."/>
            <person name="Bowser L."/>
            <person name="Brooks S.Y."/>
            <person name="Carninci P."/>
            <person name="Chao Q."/>
            <person name="Choy N."/>
            <person name="Enju A."/>
            <person name="Goldsmith A.D."/>
            <person name="Gurjal M."/>
            <person name="Hansen N.F."/>
            <person name="Hayashizaki Y."/>
            <person name="Johnson-Hopson C."/>
            <person name="Hsuan V.W."/>
            <person name="Iida K."/>
            <person name="Karnes M."/>
            <person name="Khan S."/>
            <person name="Koesema E."/>
            <person name="Ishida J."/>
            <person name="Jiang P.X."/>
            <person name="Jones T."/>
            <person name="Kawai J."/>
            <person name="Kamiya A."/>
            <person name="Meyers C."/>
            <person name="Nakajima M."/>
            <person name="Narusaka M."/>
            <person name="Seki M."/>
            <person name="Sakurai T."/>
            <person name="Satou M."/>
            <person name="Tamse R."/>
            <person name="Vaysberg M."/>
            <person name="Wallender E.K."/>
            <person name="Wong C."/>
            <person name="Yamamura Y."/>
            <person name="Yuan S."/>
            <person name="Shinozaki K."/>
            <person name="Davis R.W."/>
            <person name="Theologis A."/>
            <person name="Ecker J.R."/>
        </authorList>
    </citation>
    <scope>NUCLEOTIDE SEQUENCE [LARGE SCALE MRNA]</scope>
    <source>
        <strain>cv. Columbia</strain>
    </source>
</reference>
<reference key="5">
    <citation type="submission" date="2002-03" db="EMBL/GenBank/DDBJ databases">
        <title>Full-length cDNA from Arabidopsis thaliana.</title>
        <authorList>
            <person name="Brover V.V."/>
            <person name="Troukhan M.E."/>
            <person name="Alexandrov N.A."/>
            <person name="Lu Y.-P."/>
            <person name="Flavell R.B."/>
            <person name="Feldmann K.A."/>
        </authorList>
    </citation>
    <scope>NUCLEOTIDE SEQUENCE [LARGE SCALE MRNA]</scope>
</reference>
<reference key="6">
    <citation type="journal article" date="2012" name="Plant Cell">
        <title>Pectin biosynthesis: GALS1 in Arabidopsis thaliana is a beta-1,4-galactan beta-1,4-galactosyltransferase.</title>
        <authorList>
            <person name="Liwanag A.J."/>
            <person name="Ebert B."/>
            <person name="Verhertbruggen Y."/>
            <person name="Rennie E.A."/>
            <person name="Rautengarten C."/>
            <person name="Oikawa A."/>
            <person name="Andersen M.C."/>
            <person name="Clausen M.H."/>
            <person name="Scheller H.V."/>
        </authorList>
    </citation>
    <scope>FUNCTION</scope>
    <scope>SUBCELLULAR LOCATION</scope>
    <scope>TISSUE SPECIFICITY</scope>
    <scope>DISRUPTION PHENOTYPE</scope>
</reference>
<name>GALS1_ARATH</name>
<proteinExistence type="evidence at transcript level"/>
<keyword id="KW-0961">Cell wall biogenesis/degradation</keyword>
<keyword id="KW-0328">Glycosyltransferase</keyword>
<keyword id="KW-0333">Golgi apparatus</keyword>
<keyword id="KW-0472">Membrane</keyword>
<keyword id="KW-1185">Reference proteome</keyword>
<keyword id="KW-0808">Transferase</keyword>
<keyword id="KW-0812">Transmembrane</keyword>
<keyword id="KW-1133">Transmembrane helix</keyword>
<evidence type="ECO:0000255" key="1"/>
<evidence type="ECO:0000269" key="2">
    <source>
    </source>
</evidence>
<evidence type="ECO:0000303" key="3">
    <source>
    </source>
</evidence>
<evidence type="ECO:0000305" key="4"/>
<evidence type="ECO:0000305" key="5">
    <source>
    </source>
</evidence>
<evidence type="ECO:0000312" key="6">
    <source>
        <dbReference type="Araport" id="AT2G33570"/>
    </source>
</evidence>
<comment type="function">
    <text evidence="2">Involved in the biosynthesis of beta-1,4-galactan. Can transfer galactose residues from UDP-galactose to beta-1,4-galactopentaose in vitro. Forms specifically beta-1,4-galactosyl linkages and can add successive beta-1,4-galactosyl residues to the acceptor. Beta-1,4-galactans are abundant polysaccharides in plant cell walls and are found as side-chain of rhamnogalacturonan I, which is a major component of pectin.</text>
</comment>
<comment type="subcellular location">
    <subcellularLocation>
        <location evidence="5">Golgi apparatus membrane</location>
        <topology evidence="1">Single-pass membrane protein</topology>
    </subcellularLocation>
</comment>
<comment type="tissue specificity">
    <text evidence="2">Expressed in root vasculature, mature leaves, trichomes, flowers, siliques and seeds.</text>
</comment>
<comment type="disruption phenotype">
    <text evidence="2">No visible phenotype under normal growth conditions, but mutant plants have reduced content of beta-1,4-galactan in leaf cell wall.</text>
</comment>
<comment type="miscellaneous">
    <text evidence="2">Plants over-expressing GALS1 have a strong increase in beta-1,4-galactan content in leaf cell wall.</text>
</comment>
<comment type="similarity">
    <text evidence="4">Belongs to the glycosyltransferase 92 family.</text>
</comment>
<organism>
    <name type="scientific">Arabidopsis thaliana</name>
    <name type="common">Mouse-ear cress</name>
    <dbReference type="NCBI Taxonomy" id="3702"/>
    <lineage>
        <taxon>Eukaryota</taxon>
        <taxon>Viridiplantae</taxon>
        <taxon>Streptophyta</taxon>
        <taxon>Embryophyta</taxon>
        <taxon>Tracheophyta</taxon>
        <taxon>Spermatophyta</taxon>
        <taxon>Magnoliopsida</taxon>
        <taxon>eudicotyledons</taxon>
        <taxon>Gunneridae</taxon>
        <taxon>Pentapetalae</taxon>
        <taxon>rosids</taxon>
        <taxon>malvids</taxon>
        <taxon>Brassicales</taxon>
        <taxon>Brassicaceae</taxon>
        <taxon>Camelineae</taxon>
        <taxon>Arabidopsis</taxon>
    </lineage>
</organism>
<dbReference type="EC" id="2.4.1.-" evidence="4"/>
<dbReference type="EMBL" id="KJ138875">
    <property type="protein sequence ID" value="AHL38815.1"/>
    <property type="molecule type" value="mRNA"/>
</dbReference>
<dbReference type="EMBL" id="AC002332">
    <property type="protein sequence ID" value="AAB80674.2"/>
    <property type="molecule type" value="Genomic_DNA"/>
</dbReference>
<dbReference type="EMBL" id="CP002685">
    <property type="protein sequence ID" value="AEC08854.1"/>
    <property type="molecule type" value="Genomic_DNA"/>
</dbReference>
<dbReference type="EMBL" id="AY140059">
    <property type="protein sequence ID" value="AAM98200.1"/>
    <property type="molecule type" value="mRNA"/>
</dbReference>
<dbReference type="EMBL" id="BT008868">
    <property type="protein sequence ID" value="AAP68307.1"/>
    <property type="molecule type" value="mRNA"/>
</dbReference>
<dbReference type="EMBL" id="AY084834">
    <property type="protein sequence ID" value="AAM61399.1"/>
    <property type="molecule type" value="mRNA"/>
</dbReference>
<dbReference type="PIR" id="B84747">
    <property type="entry name" value="B84747"/>
</dbReference>
<dbReference type="RefSeq" id="NP_565768.1">
    <property type="nucleotide sequence ID" value="NM_128917.5"/>
</dbReference>
<dbReference type="SMR" id="O22807"/>
<dbReference type="FunCoup" id="O22807">
    <property type="interactions" value="63"/>
</dbReference>
<dbReference type="STRING" id="3702.O22807"/>
<dbReference type="CAZy" id="GT92">
    <property type="family name" value="Glycosyltransferase Family 92"/>
</dbReference>
<dbReference type="GlyGen" id="O22807">
    <property type="glycosylation" value="1 site"/>
</dbReference>
<dbReference type="PaxDb" id="3702-AT2G33570.1"/>
<dbReference type="ProteomicsDB" id="230472"/>
<dbReference type="EnsemblPlants" id="AT2G33570.1">
    <property type="protein sequence ID" value="AT2G33570.1"/>
    <property type="gene ID" value="AT2G33570"/>
</dbReference>
<dbReference type="GeneID" id="817922"/>
<dbReference type="Gramene" id="AT2G33570.1">
    <property type="protein sequence ID" value="AT2G33570.1"/>
    <property type="gene ID" value="AT2G33570"/>
</dbReference>
<dbReference type="KEGG" id="ath:AT2G33570"/>
<dbReference type="Araport" id="AT2G33570"/>
<dbReference type="TAIR" id="AT2G33570">
    <property type="gene designation" value="GALS1"/>
</dbReference>
<dbReference type="eggNOG" id="KOG4735">
    <property type="taxonomic scope" value="Eukaryota"/>
</dbReference>
<dbReference type="HOGENOM" id="CLU_022400_0_0_1"/>
<dbReference type="InParanoid" id="O22807"/>
<dbReference type="OMA" id="QPYYDTI"/>
<dbReference type="OrthoDB" id="2526284at2759"/>
<dbReference type="PhylomeDB" id="O22807"/>
<dbReference type="PRO" id="PR:O22807"/>
<dbReference type="Proteomes" id="UP000006548">
    <property type="component" value="Chromosome 2"/>
</dbReference>
<dbReference type="ExpressionAtlas" id="O22807">
    <property type="expression patterns" value="baseline and differential"/>
</dbReference>
<dbReference type="GO" id="GO:0005794">
    <property type="term" value="C:Golgi apparatus"/>
    <property type="evidence" value="ECO:0000314"/>
    <property type="project" value="TAIR"/>
</dbReference>
<dbReference type="GO" id="GO:0000139">
    <property type="term" value="C:Golgi membrane"/>
    <property type="evidence" value="ECO:0007669"/>
    <property type="project" value="UniProtKB-SubCell"/>
</dbReference>
<dbReference type="GO" id="GO:0003831">
    <property type="term" value="F:beta-N-acetylglucosaminylglycopeptide beta-1,4-galactosyltransferase activity"/>
    <property type="evidence" value="ECO:0000314"/>
    <property type="project" value="TAIR"/>
</dbReference>
<dbReference type="GO" id="GO:0042546">
    <property type="term" value="P:cell wall biogenesis"/>
    <property type="evidence" value="ECO:0000315"/>
    <property type="project" value="TAIR"/>
</dbReference>
<dbReference type="GO" id="GO:0071555">
    <property type="term" value="P:cell wall organization"/>
    <property type="evidence" value="ECO:0007669"/>
    <property type="project" value="UniProtKB-KW"/>
</dbReference>
<dbReference type="GO" id="GO:0045489">
    <property type="term" value="P:pectin biosynthetic process"/>
    <property type="evidence" value="ECO:0000314"/>
    <property type="project" value="TAIR"/>
</dbReference>
<dbReference type="InterPro" id="IPR008166">
    <property type="entry name" value="Glyco_transf_92"/>
</dbReference>
<dbReference type="PANTHER" id="PTHR21461:SF56">
    <property type="entry name" value="GALACTAN BETA-1,4-GALACTOSYLTRANSFERASE GALS1"/>
    <property type="match status" value="1"/>
</dbReference>
<dbReference type="PANTHER" id="PTHR21461">
    <property type="entry name" value="GLYCOSYLTRANSFERASE FAMILY 92 PROTEIN"/>
    <property type="match status" value="1"/>
</dbReference>
<dbReference type="Pfam" id="PF01697">
    <property type="entry name" value="Glyco_transf_92"/>
    <property type="match status" value="1"/>
</dbReference>
<gene>
    <name evidence="3" type="primary">GALS1</name>
    <name evidence="6" type="ordered locus">At2g33570</name>
</gene>
<accession>O22807</accession>
<protein>
    <recommendedName>
        <fullName evidence="4">Galactan beta-1,4-galactosyltransferase GALS1</fullName>
        <ecNumber evidence="4">2.4.1.-</ecNumber>
    </recommendedName>
    <alternativeName>
        <fullName>Beta-1,4-galactan synthase</fullName>
    </alternativeName>
    <alternativeName>
        <fullName evidence="3">Galactan synthase 1</fullName>
    </alternativeName>
</protein>
<sequence>MRKEVLPPVLSTTTVCFEKKPIIATLLALSLVMIVWNLPPYYHNLISTARPCSAVTTTTTTTLLSSSNFTSAENFTTSLSTTTAAASQKYDSTPSDPNKRVFQPFGNAAALFVLMGAYRGGPTTFSVIGLASKPIHVYGKPWYKCEWISNNGTSIRAKAQKILPDWGYGRVYTVVVVNCTFNSNPNSDNTGGKLILNAYYNESPKLFERFTTLEESAGIYDESKYSPPYQYDYLYCGSSLYGNVSASRMREWMAYHAWFFGDKSHFVFHDAGGVSPEVRKVLEPWIRAGRVTVQNIRDQSQYDGYYYNQFLIVNDCLHRYRYAANWTFFFDVDEYIYLPHGNTLESVLDEFSVNTQFTIEQNPMSSVLCINDSSQDYPRQWGFEKLLFKDSRTKIRRDRKYAIQAKNAFATGVHMSENIVGKTLHKTETKIRYYHYHNTITVHEELCREMLPNSAKKKVTLYNKLPYVYDDNMKKLVKTIKEFEQKKLGTDVKNFS</sequence>
<feature type="chain" id="PRO_0000435703" description="Galactan beta-1,4-galactosyltransferase GALS1">
    <location>
        <begin position="1"/>
        <end position="496"/>
    </location>
</feature>
<feature type="transmembrane region" description="Helical" evidence="1">
    <location>
        <begin position="22"/>
        <end position="42"/>
    </location>
</feature>
<feature type="domain" description="GT92" evidence="1">
    <location>
        <begin position="232"/>
        <end position="464"/>
    </location>
</feature>